<reference key="1">
    <citation type="journal article" date="2000" name="Science">
        <title>The genome sequence of Drosophila melanogaster.</title>
        <authorList>
            <person name="Adams M.D."/>
            <person name="Celniker S.E."/>
            <person name="Holt R.A."/>
            <person name="Evans C.A."/>
            <person name="Gocayne J.D."/>
            <person name="Amanatides P.G."/>
            <person name="Scherer S.E."/>
            <person name="Li P.W."/>
            <person name="Hoskins R.A."/>
            <person name="Galle R.F."/>
            <person name="George R.A."/>
            <person name="Lewis S.E."/>
            <person name="Richards S."/>
            <person name="Ashburner M."/>
            <person name="Henderson S.N."/>
            <person name="Sutton G.G."/>
            <person name="Wortman J.R."/>
            <person name="Yandell M.D."/>
            <person name="Zhang Q."/>
            <person name="Chen L.X."/>
            <person name="Brandon R.C."/>
            <person name="Rogers Y.-H.C."/>
            <person name="Blazej R.G."/>
            <person name="Champe M."/>
            <person name="Pfeiffer B.D."/>
            <person name="Wan K.H."/>
            <person name="Doyle C."/>
            <person name="Baxter E.G."/>
            <person name="Helt G."/>
            <person name="Nelson C.R."/>
            <person name="Miklos G.L.G."/>
            <person name="Abril J.F."/>
            <person name="Agbayani A."/>
            <person name="An H.-J."/>
            <person name="Andrews-Pfannkoch C."/>
            <person name="Baldwin D."/>
            <person name="Ballew R.M."/>
            <person name="Basu A."/>
            <person name="Baxendale J."/>
            <person name="Bayraktaroglu L."/>
            <person name="Beasley E.M."/>
            <person name="Beeson K.Y."/>
            <person name="Benos P.V."/>
            <person name="Berman B.P."/>
            <person name="Bhandari D."/>
            <person name="Bolshakov S."/>
            <person name="Borkova D."/>
            <person name="Botchan M.R."/>
            <person name="Bouck J."/>
            <person name="Brokstein P."/>
            <person name="Brottier P."/>
            <person name="Burtis K.C."/>
            <person name="Busam D.A."/>
            <person name="Butler H."/>
            <person name="Cadieu E."/>
            <person name="Center A."/>
            <person name="Chandra I."/>
            <person name="Cherry J.M."/>
            <person name="Cawley S."/>
            <person name="Dahlke C."/>
            <person name="Davenport L.B."/>
            <person name="Davies P."/>
            <person name="de Pablos B."/>
            <person name="Delcher A."/>
            <person name="Deng Z."/>
            <person name="Mays A.D."/>
            <person name="Dew I."/>
            <person name="Dietz S.M."/>
            <person name="Dodson K."/>
            <person name="Doup L.E."/>
            <person name="Downes M."/>
            <person name="Dugan-Rocha S."/>
            <person name="Dunkov B.C."/>
            <person name="Dunn P."/>
            <person name="Durbin K.J."/>
            <person name="Evangelista C.C."/>
            <person name="Ferraz C."/>
            <person name="Ferriera S."/>
            <person name="Fleischmann W."/>
            <person name="Fosler C."/>
            <person name="Gabrielian A.E."/>
            <person name="Garg N.S."/>
            <person name="Gelbart W.M."/>
            <person name="Glasser K."/>
            <person name="Glodek A."/>
            <person name="Gong F."/>
            <person name="Gorrell J.H."/>
            <person name="Gu Z."/>
            <person name="Guan P."/>
            <person name="Harris M."/>
            <person name="Harris N.L."/>
            <person name="Harvey D.A."/>
            <person name="Heiman T.J."/>
            <person name="Hernandez J.R."/>
            <person name="Houck J."/>
            <person name="Hostin D."/>
            <person name="Houston K.A."/>
            <person name="Howland T.J."/>
            <person name="Wei M.-H."/>
            <person name="Ibegwam C."/>
            <person name="Jalali M."/>
            <person name="Kalush F."/>
            <person name="Karpen G.H."/>
            <person name="Ke Z."/>
            <person name="Kennison J.A."/>
            <person name="Ketchum K.A."/>
            <person name="Kimmel B.E."/>
            <person name="Kodira C.D."/>
            <person name="Kraft C.L."/>
            <person name="Kravitz S."/>
            <person name="Kulp D."/>
            <person name="Lai Z."/>
            <person name="Lasko P."/>
            <person name="Lei Y."/>
            <person name="Levitsky A.A."/>
            <person name="Li J.H."/>
            <person name="Li Z."/>
            <person name="Liang Y."/>
            <person name="Lin X."/>
            <person name="Liu X."/>
            <person name="Mattei B."/>
            <person name="McIntosh T.C."/>
            <person name="McLeod M.P."/>
            <person name="McPherson D."/>
            <person name="Merkulov G."/>
            <person name="Milshina N.V."/>
            <person name="Mobarry C."/>
            <person name="Morris J."/>
            <person name="Moshrefi A."/>
            <person name="Mount S.M."/>
            <person name="Moy M."/>
            <person name="Murphy B."/>
            <person name="Murphy L."/>
            <person name="Muzny D.M."/>
            <person name="Nelson D.L."/>
            <person name="Nelson D.R."/>
            <person name="Nelson K.A."/>
            <person name="Nixon K."/>
            <person name="Nusskern D.R."/>
            <person name="Pacleb J.M."/>
            <person name="Palazzolo M."/>
            <person name="Pittman G.S."/>
            <person name="Pan S."/>
            <person name="Pollard J."/>
            <person name="Puri V."/>
            <person name="Reese M.G."/>
            <person name="Reinert K."/>
            <person name="Remington K."/>
            <person name="Saunders R.D.C."/>
            <person name="Scheeler F."/>
            <person name="Shen H."/>
            <person name="Shue B.C."/>
            <person name="Siden-Kiamos I."/>
            <person name="Simpson M."/>
            <person name="Skupski M.P."/>
            <person name="Smith T.J."/>
            <person name="Spier E."/>
            <person name="Spradling A.C."/>
            <person name="Stapleton M."/>
            <person name="Strong R."/>
            <person name="Sun E."/>
            <person name="Svirskas R."/>
            <person name="Tector C."/>
            <person name="Turner R."/>
            <person name="Venter E."/>
            <person name="Wang A.H."/>
            <person name="Wang X."/>
            <person name="Wang Z.-Y."/>
            <person name="Wassarman D.A."/>
            <person name="Weinstock G.M."/>
            <person name="Weissenbach J."/>
            <person name="Williams S.M."/>
            <person name="Woodage T."/>
            <person name="Worley K.C."/>
            <person name="Wu D."/>
            <person name="Yang S."/>
            <person name="Yao Q.A."/>
            <person name="Ye J."/>
            <person name="Yeh R.-F."/>
            <person name="Zaveri J.S."/>
            <person name="Zhan M."/>
            <person name="Zhang G."/>
            <person name="Zhao Q."/>
            <person name="Zheng L."/>
            <person name="Zheng X.H."/>
            <person name="Zhong F.N."/>
            <person name="Zhong W."/>
            <person name="Zhou X."/>
            <person name="Zhu S.C."/>
            <person name="Zhu X."/>
            <person name="Smith H.O."/>
            <person name="Gibbs R.A."/>
            <person name="Myers E.W."/>
            <person name="Rubin G.M."/>
            <person name="Venter J.C."/>
        </authorList>
    </citation>
    <scope>NUCLEOTIDE SEQUENCE [LARGE SCALE GENOMIC DNA]</scope>
    <source>
        <strain>Berkeley</strain>
    </source>
</reference>
<reference key="2">
    <citation type="journal article" date="2002" name="Genome Biol.">
        <title>Annotation of the Drosophila melanogaster euchromatic genome: a systematic review.</title>
        <authorList>
            <person name="Misra S."/>
            <person name="Crosby M.A."/>
            <person name="Mungall C.J."/>
            <person name="Matthews B.B."/>
            <person name="Campbell K.S."/>
            <person name="Hradecky P."/>
            <person name="Huang Y."/>
            <person name="Kaminker J.S."/>
            <person name="Millburn G.H."/>
            <person name="Prochnik S.E."/>
            <person name="Smith C.D."/>
            <person name="Tupy J.L."/>
            <person name="Whitfield E.J."/>
            <person name="Bayraktaroglu L."/>
            <person name="Berman B.P."/>
            <person name="Bettencourt B.R."/>
            <person name="Celniker S.E."/>
            <person name="de Grey A.D.N.J."/>
            <person name="Drysdale R.A."/>
            <person name="Harris N.L."/>
            <person name="Richter J."/>
            <person name="Russo S."/>
            <person name="Schroeder A.J."/>
            <person name="Shu S.Q."/>
            <person name="Stapleton M."/>
            <person name="Yamada C."/>
            <person name="Ashburner M."/>
            <person name="Gelbart W.M."/>
            <person name="Rubin G.M."/>
            <person name="Lewis S.E."/>
        </authorList>
    </citation>
    <scope>GENOME REANNOTATION</scope>
    <source>
        <strain>Berkeley</strain>
    </source>
</reference>
<reference key="3">
    <citation type="submission" date="2003-02" db="EMBL/GenBank/DDBJ databases">
        <authorList>
            <person name="Stapleton M."/>
            <person name="Brokstein P."/>
            <person name="Hong L."/>
            <person name="Agbayani A."/>
            <person name="Carlson J."/>
            <person name="Champe M."/>
            <person name="Chavez C."/>
            <person name="Dorsett V."/>
            <person name="Dresnek D."/>
            <person name="Farfan D."/>
            <person name="Frise E."/>
            <person name="George R."/>
            <person name="Gonzalez M."/>
            <person name="Guarin H."/>
            <person name="Kronmiller B."/>
            <person name="Li P."/>
            <person name="Liao G."/>
            <person name="Miranda A."/>
            <person name="Mungall C.J."/>
            <person name="Nunoo J."/>
            <person name="Pacleb J."/>
            <person name="Paragas V."/>
            <person name="Park S."/>
            <person name="Patel S."/>
            <person name="Phouanenavong S."/>
            <person name="Wan K."/>
            <person name="Yu C."/>
            <person name="Lewis S.E."/>
            <person name="Rubin G.M."/>
            <person name="Celniker S.E."/>
        </authorList>
    </citation>
    <scope>NUCLEOTIDE SEQUENCE [LARGE SCALE MRNA]</scope>
    <source>
        <strain>Berkeley</strain>
        <tissue>Head</tissue>
    </source>
</reference>
<reference key="4">
    <citation type="journal article" date="2005" name="Genetics">
        <title>The WD40 repeat protein fritz links cytoskeletal planar polarity to frizzled subcellular localization in the Drosophila epidermis.</title>
        <authorList>
            <person name="Collier S."/>
            <person name="Lee H."/>
            <person name="Burgess R."/>
            <person name="Adler P."/>
        </authorList>
    </citation>
    <scope>FUNCTION</scope>
    <scope>DEVELOPMENTAL STAGE</scope>
</reference>
<accession>Q9VQ36</accession>
<keyword id="KW-1003">Cell membrane</keyword>
<keyword id="KW-0966">Cell projection</keyword>
<keyword id="KW-0969">Cilium</keyword>
<keyword id="KW-0970">Cilium biogenesis/degradation</keyword>
<keyword id="KW-0963">Cytoplasm</keyword>
<keyword id="KW-0206">Cytoskeleton</keyword>
<keyword id="KW-0472">Membrane</keyword>
<keyword id="KW-1185">Reference proteome</keyword>
<keyword id="KW-0677">Repeat</keyword>
<keyword id="KW-0853">WD repeat</keyword>
<protein>
    <recommendedName>
        <fullName>WD repeat-containing and planar cell polarity effector protein fritz</fullName>
    </recommendedName>
</protein>
<gene>
    <name type="primary">frtz</name>
    <name type="ORF">CG17657</name>
</gene>
<name>FRITZ_DROME</name>
<comment type="function">
    <text evidence="3">Probable effector of the planar cell polarity signaling pathway which regulates the septin cytoskeleton in both ciliogenesis and collective cell movements. Functions cell autonomously to regulate wing cell hair polarity and number.</text>
</comment>
<comment type="interaction">
    <interactant intactId="EBI-164303">
        <id>Q9VQ36</id>
    </interactant>
    <interactant intactId="EBI-2890486">
        <id>Q9VPH0</id>
        <label>in</label>
    </interactant>
    <organismsDiffer>false</organismsDiffer>
    <experiments>4</experiments>
</comment>
<comment type="subcellular location">
    <subcellularLocation>
        <location evidence="1">Cell membrane</location>
    </subcellularLocation>
    <subcellularLocation>
        <location evidence="1">Cytoplasm</location>
        <location evidence="1">Cytoskeleton</location>
        <location evidence="1">Cilium axoneme</location>
    </subcellularLocation>
</comment>
<comment type="developmental stage">
    <text evidence="3">Expressed during embryogenesis mainly in embryonic epidermis.</text>
</comment>
<comment type="similarity">
    <text evidence="4">Belongs to the WD repeat fritz family.</text>
</comment>
<evidence type="ECO:0000250" key="1"/>
<evidence type="ECO:0000256" key="2">
    <source>
        <dbReference type="SAM" id="MobiDB-lite"/>
    </source>
</evidence>
<evidence type="ECO:0000269" key="3">
    <source>
    </source>
</evidence>
<evidence type="ECO:0000305" key="4"/>
<organism>
    <name type="scientific">Drosophila melanogaster</name>
    <name type="common">Fruit fly</name>
    <dbReference type="NCBI Taxonomy" id="7227"/>
    <lineage>
        <taxon>Eukaryota</taxon>
        <taxon>Metazoa</taxon>
        <taxon>Ecdysozoa</taxon>
        <taxon>Arthropoda</taxon>
        <taxon>Hexapoda</taxon>
        <taxon>Insecta</taxon>
        <taxon>Pterygota</taxon>
        <taxon>Neoptera</taxon>
        <taxon>Endopterygota</taxon>
        <taxon>Diptera</taxon>
        <taxon>Brachycera</taxon>
        <taxon>Muscomorpha</taxon>
        <taxon>Ephydroidea</taxon>
        <taxon>Drosophilidae</taxon>
        <taxon>Drosophila</taxon>
        <taxon>Sophophora</taxon>
    </lineage>
</organism>
<feature type="chain" id="PRO_0000406198" description="WD repeat-containing and planar cell polarity effector protein fritz">
    <location>
        <begin position="1"/>
        <end position="951"/>
    </location>
</feature>
<feature type="repeat" description="WD 1">
    <location>
        <begin position="304"/>
        <end position="343"/>
    </location>
</feature>
<feature type="repeat" description="WD 2">
    <location>
        <begin position="345"/>
        <end position="384"/>
    </location>
</feature>
<feature type="region of interest" description="Disordered" evidence="2">
    <location>
        <begin position="709"/>
        <end position="776"/>
    </location>
</feature>
<feature type="region of interest" description="Disordered" evidence="2">
    <location>
        <begin position="816"/>
        <end position="883"/>
    </location>
</feature>
<feature type="region of interest" description="Disordered" evidence="2">
    <location>
        <begin position="903"/>
        <end position="951"/>
    </location>
</feature>
<feature type="compositionally biased region" description="Polar residues" evidence="2">
    <location>
        <begin position="709"/>
        <end position="720"/>
    </location>
</feature>
<feature type="compositionally biased region" description="Polar residues" evidence="2">
    <location>
        <begin position="757"/>
        <end position="771"/>
    </location>
</feature>
<feature type="compositionally biased region" description="Polar residues" evidence="2">
    <location>
        <begin position="818"/>
        <end position="828"/>
    </location>
</feature>
<feature type="compositionally biased region" description="Low complexity" evidence="2">
    <location>
        <begin position="930"/>
        <end position="942"/>
    </location>
</feature>
<sequence length="951" mass="106066">MLLSETHFWTTLREDVVRIKSQDLGAFRYLRQRDKEQEQQDLACLAKRDYTERRNGLAVLKNSGRKSTGRLKDNLKKLEDLLRQHRIIHSEWQDAAQVLLLFSHGLIAHICVDIYTGDILRMVFEKYLVGKLASEVITDAFFTRSHIVLAYNTNQLTVVHLQRPNARSQGPEKIANMDPRIFHVIIPGATERKLSRHLTVNASFDLFVVWTQSSQNEVYPWRPTIRDQDRANIHVFKIKGLQLESIAYCWSENDPLCVDFLRSSESQIITLEQKVSRKGDISAEICSYELAAGKMQRTAITSIPMGAQICSFAFSPDQEKLFLGSVDRNICLHDLVQQSTKYANQIEIVPNQCAWHCDSAMLCVANERSVLQCFDLALATIGHQLVSENVTPSSLLDLSHYFVAQPTLLSVAFSRKPDLSTFKHTYAQTDCLLLLVYEQGPLACMRIFGGTGMRGDIHNSGLTADVIADKYLRLQQPDRAVNVLAALNWETYGAMCLITLHKIANYVFFGGDQRRPRIELMARALKTFAHTLSEETKDEFSDQVYDLKRRFCFYLLRKNLFAEAFEIAQDVADYDIFMDLYNLTKCISSLSEFAQVAFSQAAAIIHEEDRANGNLSLTCDLRSESACSLSTCSDMLRGQGAGTAPETGLGASQPQSQQVLKNYVPPLPSFKSKVFNAEMIKINIPKPELRPPLPKVSIAPPTSSLASLTLKSNSSLQQAPAKSLHPNGNLWSQDVPDQTVGLPMASSPLPRLPPSNIPDQSAQLGQFSTMPASPPPTGSYQPKFYQHPLVSGNIPAMLPSLTSEDYQKRLLQKKPTASILSNPANPAPTNGEAPATPAKSQTAEKNKVKFSDTIQVAVVPEIPRKEKPMPPKRNGYSRPAARHLTNPKKELADSLPLCHPNDEYLKDFNPITTNVTKPPIRRREEEPKSSSKGGNSSSSSSSIKVVHFGVV</sequence>
<dbReference type="EMBL" id="AE014134">
    <property type="protein sequence ID" value="AAF51346.1"/>
    <property type="molecule type" value="Genomic_DNA"/>
</dbReference>
<dbReference type="EMBL" id="BT004832">
    <property type="protein sequence ID" value="AAO45188.1"/>
    <property type="molecule type" value="mRNA"/>
</dbReference>
<dbReference type="RefSeq" id="NP_001259879.1">
    <property type="nucleotide sequence ID" value="NM_001272950.1"/>
</dbReference>
<dbReference type="RefSeq" id="NP_608614.1">
    <property type="nucleotide sequence ID" value="NM_134770.2"/>
</dbReference>
<dbReference type="SMR" id="Q9VQ36"/>
<dbReference type="BioGRID" id="59589">
    <property type="interactions" value="8"/>
</dbReference>
<dbReference type="FunCoup" id="Q9VQ36">
    <property type="interactions" value="245"/>
</dbReference>
<dbReference type="IntAct" id="Q9VQ36">
    <property type="interactions" value="5"/>
</dbReference>
<dbReference type="STRING" id="7227.FBpp0077577"/>
<dbReference type="GlyGen" id="Q9VQ36">
    <property type="glycosylation" value="1 site"/>
</dbReference>
<dbReference type="PaxDb" id="7227-FBpp0077577"/>
<dbReference type="EnsemblMetazoa" id="FBtr0077911">
    <property type="protein sequence ID" value="FBpp0077577"/>
    <property type="gene ID" value="FBgn0086698"/>
</dbReference>
<dbReference type="EnsemblMetazoa" id="FBtr0333544">
    <property type="protein sequence ID" value="FBpp0305724"/>
    <property type="gene ID" value="FBgn0086698"/>
</dbReference>
<dbReference type="GeneID" id="33349"/>
<dbReference type="KEGG" id="dme:Dmel_CG17657"/>
<dbReference type="UCSC" id="CG17657-RA">
    <property type="organism name" value="d. melanogaster"/>
</dbReference>
<dbReference type="AGR" id="FB:FBgn0086698"/>
<dbReference type="CTD" id="33349"/>
<dbReference type="FlyBase" id="FBgn0086698">
    <property type="gene designation" value="frtz"/>
</dbReference>
<dbReference type="VEuPathDB" id="VectorBase:FBgn0086698"/>
<dbReference type="eggNOG" id="ENOG502QR8Y">
    <property type="taxonomic scope" value="Eukaryota"/>
</dbReference>
<dbReference type="GeneTree" id="ENSGT00390000016551"/>
<dbReference type="InParanoid" id="Q9VQ36"/>
<dbReference type="OMA" id="THICVDI"/>
<dbReference type="OrthoDB" id="10013020at2759"/>
<dbReference type="PhylomeDB" id="Q9VQ36"/>
<dbReference type="Reactome" id="R-DME-450728">
    <property type="pathway name" value="Inhibition of actin polymerization"/>
</dbReference>
<dbReference type="SignaLink" id="Q9VQ36"/>
<dbReference type="BioGRID-ORCS" id="33349">
    <property type="hits" value="0 hits in 1 CRISPR screen"/>
</dbReference>
<dbReference type="GenomeRNAi" id="33349"/>
<dbReference type="PRO" id="PR:Q9VQ36"/>
<dbReference type="Proteomes" id="UP000000803">
    <property type="component" value="Chromosome 2L"/>
</dbReference>
<dbReference type="Bgee" id="FBgn0086698">
    <property type="expression patterns" value="Expressed in lamina monopolar neuron L2 (Drosophila) in insect head and 54 other cell types or tissues"/>
</dbReference>
<dbReference type="ExpressionAtlas" id="Q9VQ36">
    <property type="expression patterns" value="baseline and differential"/>
</dbReference>
<dbReference type="GO" id="GO:0097541">
    <property type="term" value="C:axonemal basal plate"/>
    <property type="evidence" value="ECO:0000318"/>
    <property type="project" value="GO_Central"/>
</dbReference>
<dbReference type="GO" id="GO:0005829">
    <property type="term" value="C:cytosol"/>
    <property type="evidence" value="ECO:0000304"/>
    <property type="project" value="Reactome"/>
</dbReference>
<dbReference type="GO" id="GO:0005886">
    <property type="term" value="C:plasma membrane"/>
    <property type="evidence" value="ECO:0007669"/>
    <property type="project" value="UniProtKB-SubCell"/>
</dbReference>
<dbReference type="GO" id="GO:0044782">
    <property type="term" value="P:cilium organization"/>
    <property type="evidence" value="ECO:0000318"/>
    <property type="project" value="GO_Central"/>
</dbReference>
<dbReference type="GO" id="GO:0045184">
    <property type="term" value="P:establishment of protein localization"/>
    <property type="evidence" value="ECO:0000318"/>
    <property type="project" value="GO_Central"/>
</dbReference>
<dbReference type="GO" id="GO:0035320">
    <property type="term" value="P:imaginal disc-derived wing hair site selection"/>
    <property type="evidence" value="ECO:0000315"/>
    <property type="project" value="FlyBase"/>
</dbReference>
<dbReference type="GO" id="GO:0007399">
    <property type="term" value="P:nervous system development"/>
    <property type="evidence" value="ECO:0000318"/>
    <property type="project" value="GO_Central"/>
</dbReference>
<dbReference type="Gene3D" id="2.130.10.10">
    <property type="entry name" value="YVTN repeat-like/Quinoprotein amine dehydrogenase"/>
    <property type="match status" value="1"/>
</dbReference>
<dbReference type="InterPro" id="IPR024511">
    <property type="entry name" value="Frtz"/>
</dbReference>
<dbReference type="InterPro" id="IPR015943">
    <property type="entry name" value="WD40/YVTN_repeat-like_dom_sf"/>
</dbReference>
<dbReference type="InterPro" id="IPR036322">
    <property type="entry name" value="WD40_repeat_dom_sf"/>
</dbReference>
<dbReference type="PANTHER" id="PTHR13667">
    <property type="entry name" value="HOMOLOC-13"/>
    <property type="match status" value="1"/>
</dbReference>
<dbReference type="PANTHER" id="PTHR13667:SF5">
    <property type="entry name" value="WD REPEAT-CONTAINING AND PLANAR CELL POLARITY EFFECTOR PROTEIN FRITZ HOMOLOG"/>
    <property type="match status" value="1"/>
</dbReference>
<dbReference type="Pfam" id="PF11768">
    <property type="entry name" value="Frtz"/>
    <property type="match status" value="1"/>
</dbReference>
<dbReference type="SUPFAM" id="SSF50978">
    <property type="entry name" value="WD40 repeat-like"/>
    <property type="match status" value="1"/>
</dbReference>
<proteinExistence type="evidence at protein level"/>